<proteinExistence type="inferred from homology"/>
<feature type="chain" id="PRO_1000078477" description="Large ribosomal subunit protein bL36">
    <location>
        <begin position="1"/>
        <end position="37"/>
    </location>
</feature>
<protein>
    <recommendedName>
        <fullName evidence="1">Large ribosomal subunit protein bL36</fullName>
    </recommendedName>
    <alternativeName>
        <fullName evidence="2">50S ribosomal protein L36</fullName>
    </alternativeName>
</protein>
<name>RL36_MARMS</name>
<comment type="similarity">
    <text evidence="1">Belongs to the bacterial ribosomal protein bL36 family.</text>
</comment>
<sequence length="37" mass="4334">MKVRASVKKICRNCKIVRRNGSVRVICVEPRHKQRQG</sequence>
<dbReference type="EMBL" id="CP000749">
    <property type="protein sequence ID" value="ABR73150.1"/>
    <property type="molecule type" value="Genomic_DNA"/>
</dbReference>
<dbReference type="SMR" id="A6W371"/>
<dbReference type="STRING" id="400668.Mmwyl1_4255"/>
<dbReference type="KEGG" id="mmw:Mmwyl1_4255"/>
<dbReference type="eggNOG" id="COG0257">
    <property type="taxonomic scope" value="Bacteria"/>
</dbReference>
<dbReference type="HOGENOM" id="CLU_135723_6_2_6"/>
<dbReference type="OrthoDB" id="9802520at2"/>
<dbReference type="GO" id="GO:0005737">
    <property type="term" value="C:cytoplasm"/>
    <property type="evidence" value="ECO:0007669"/>
    <property type="project" value="UniProtKB-ARBA"/>
</dbReference>
<dbReference type="GO" id="GO:1990904">
    <property type="term" value="C:ribonucleoprotein complex"/>
    <property type="evidence" value="ECO:0007669"/>
    <property type="project" value="UniProtKB-KW"/>
</dbReference>
<dbReference type="GO" id="GO:0005840">
    <property type="term" value="C:ribosome"/>
    <property type="evidence" value="ECO:0007669"/>
    <property type="project" value="UniProtKB-KW"/>
</dbReference>
<dbReference type="GO" id="GO:0003735">
    <property type="term" value="F:structural constituent of ribosome"/>
    <property type="evidence" value="ECO:0007669"/>
    <property type="project" value="InterPro"/>
</dbReference>
<dbReference type="GO" id="GO:0006412">
    <property type="term" value="P:translation"/>
    <property type="evidence" value="ECO:0007669"/>
    <property type="project" value="UniProtKB-UniRule"/>
</dbReference>
<dbReference type="HAMAP" id="MF_00251">
    <property type="entry name" value="Ribosomal_bL36"/>
    <property type="match status" value="1"/>
</dbReference>
<dbReference type="InterPro" id="IPR000473">
    <property type="entry name" value="Ribosomal_bL36"/>
</dbReference>
<dbReference type="InterPro" id="IPR035977">
    <property type="entry name" value="Ribosomal_bL36_sp"/>
</dbReference>
<dbReference type="NCBIfam" id="TIGR01022">
    <property type="entry name" value="rpmJ_bact"/>
    <property type="match status" value="1"/>
</dbReference>
<dbReference type="PANTHER" id="PTHR42888">
    <property type="entry name" value="50S RIBOSOMAL PROTEIN L36, CHLOROPLASTIC"/>
    <property type="match status" value="1"/>
</dbReference>
<dbReference type="PANTHER" id="PTHR42888:SF1">
    <property type="entry name" value="LARGE RIBOSOMAL SUBUNIT PROTEIN BL36C"/>
    <property type="match status" value="1"/>
</dbReference>
<dbReference type="Pfam" id="PF00444">
    <property type="entry name" value="Ribosomal_L36"/>
    <property type="match status" value="1"/>
</dbReference>
<dbReference type="SUPFAM" id="SSF57840">
    <property type="entry name" value="Ribosomal protein L36"/>
    <property type="match status" value="1"/>
</dbReference>
<dbReference type="PROSITE" id="PS00828">
    <property type="entry name" value="RIBOSOMAL_L36"/>
    <property type="match status" value="1"/>
</dbReference>
<evidence type="ECO:0000255" key="1">
    <source>
        <dbReference type="HAMAP-Rule" id="MF_00251"/>
    </source>
</evidence>
<evidence type="ECO:0000305" key="2"/>
<gene>
    <name evidence="1" type="primary">rpmJ</name>
    <name type="ordered locus">Mmwyl1_4255</name>
</gene>
<reference key="1">
    <citation type="submission" date="2007-06" db="EMBL/GenBank/DDBJ databases">
        <title>Complete sequence of Marinomonas sp. MWYL1.</title>
        <authorList>
            <consortium name="US DOE Joint Genome Institute"/>
            <person name="Copeland A."/>
            <person name="Lucas S."/>
            <person name="Lapidus A."/>
            <person name="Barry K."/>
            <person name="Glavina del Rio T."/>
            <person name="Dalin E."/>
            <person name="Tice H."/>
            <person name="Pitluck S."/>
            <person name="Kiss H."/>
            <person name="Brettin T."/>
            <person name="Bruce D."/>
            <person name="Detter J.C."/>
            <person name="Han C."/>
            <person name="Schmutz J."/>
            <person name="Larimer F."/>
            <person name="Land M."/>
            <person name="Hauser L."/>
            <person name="Kyrpides N."/>
            <person name="Kim E."/>
            <person name="Johnston A.W.B."/>
            <person name="Todd J.D."/>
            <person name="Rogers R."/>
            <person name="Wexler M."/>
            <person name="Bond P.L."/>
            <person name="Li Y."/>
            <person name="Richardson P."/>
        </authorList>
    </citation>
    <scope>NUCLEOTIDE SEQUENCE [LARGE SCALE GENOMIC DNA]</scope>
    <source>
        <strain>MWYL1</strain>
    </source>
</reference>
<keyword id="KW-0687">Ribonucleoprotein</keyword>
<keyword id="KW-0689">Ribosomal protein</keyword>
<organism>
    <name type="scientific">Marinomonas sp. (strain MWYL1)</name>
    <dbReference type="NCBI Taxonomy" id="400668"/>
    <lineage>
        <taxon>Bacteria</taxon>
        <taxon>Pseudomonadati</taxon>
        <taxon>Pseudomonadota</taxon>
        <taxon>Gammaproteobacteria</taxon>
        <taxon>Oceanospirillales</taxon>
        <taxon>Oceanospirillaceae</taxon>
        <taxon>Marinomonas</taxon>
    </lineage>
</organism>
<accession>A6W371</accession>